<comment type="subcellular location">
    <subcellularLocation>
        <location evidence="2">Membrane</location>
        <topology evidence="2">Single-pass membrane protein</topology>
    </subcellularLocation>
</comment>
<gene>
    <name type="ordered locus">aq_1849</name>
</gene>
<reference key="1">
    <citation type="journal article" date="1998" name="Nature">
        <title>The complete genome of the hyperthermophilic bacterium Aquifex aeolicus.</title>
        <authorList>
            <person name="Deckert G."/>
            <person name="Warren P.V."/>
            <person name="Gaasterland T."/>
            <person name="Young W.G."/>
            <person name="Lenox A.L."/>
            <person name="Graham D.E."/>
            <person name="Overbeek R."/>
            <person name="Snead M.A."/>
            <person name="Keller M."/>
            <person name="Aujay M."/>
            <person name="Huber R."/>
            <person name="Feldman R.A."/>
            <person name="Short J.M."/>
            <person name="Olsen G.J."/>
            <person name="Swanson R.V."/>
        </authorList>
    </citation>
    <scope>NUCLEOTIDE SEQUENCE [LARGE SCALE GENOMIC DNA]</scope>
    <source>
        <strain>VF5</strain>
    </source>
</reference>
<organism>
    <name type="scientific">Aquifex aeolicus (strain VF5)</name>
    <dbReference type="NCBI Taxonomy" id="224324"/>
    <lineage>
        <taxon>Bacteria</taxon>
        <taxon>Pseudomonadati</taxon>
        <taxon>Aquificota</taxon>
        <taxon>Aquificia</taxon>
        <taxon>Aquificales</taxon>
        <taxon>Aquificaceae</taxon>
        <taxon>Aquifex</taxon>
    </lineage>
</organism>
<dbReference type="EMBL" id="AE000657">
    <property type="protein sequence ID" value="AAC07668.1"/>
    <property type="molecule type" value="Genomic_DNA"/>
</dbReference>
<dbReference type="PIR" id="C70459">
    <property type="entry name" value="C70459"/>
</dbReference>
<dbReference type="RefSeq" id="NP_214269.1">
    <property type="nucleotide sequence ID" value="NC_000918.1"/>
</dbReference>
<dbReference type="SMR" id="O67701"/>
<dbReference type="STRING" id="224324.aq_1849"/>
<dbReference type="EnsemblBacteria" id="AAC07668">
    <property type="protein sequence ID" value="AAC07668"/>
    <property type="gene ID" value="aq_1849"/>
</dbReference>
<dbReference type="KEGG" id="aae:aq_1849"/>
<dbReference type="HOGENOM" id="CLU_1259291_0_0_0"/>
<dbReference type="InParanoid" id="O67701"/>
<dbReference type="OrthoDB" id="9825532at2"/>
<dbReference type="Proteomes" id="UP000000798">
    <property type="component" value="Chromosome"/>
</dbReference>
<dbReference type="GO" id="GO:0016020">
    <property type="term" value="C:membrane"/>
    <property type="evidence" value="ECO:0007669"/>
    <property type="project" value="UniProtKB-SubCell"/>
</dbReference>
<sequence length="219" mass="25129">MKAYLFIFIFLFLLNFLILFFVLKTELIVSSLIAGGYALFVSAFTSYVYTKKVEKLLGVLLYFAEFVYENRQNLEGSVFYSPLYEELRDIVSYIEGGIKNVKSSLEKQLADVHVEYTEVVEKLGQIMEVVERLKQGEIEYGALPTGLDPAGALGEILRESLSEIAKKIDNIKRKIYELDDTIKKVKNYAEAGEEELVKAEITRTKSILEEIEKELEFFK</sequence>
<keyword id="KW-0175">Coiled coil</keyword>
<keyword id="KW-0472">Membrane</keyword>
<keyword id="KW-1185">Reference proteome</keyword>
<keyword id="KW-0812">Transmembrane</keyword>
<keyword id="KW-1133">Transmembrane helix</keyword>
<feature type="chain" id="PRO_0000186952" description="Uncharacterized protein aq_1849">
    <location>
        <begin position="1"/>
        <end position="219"/>
    </location>
</feature>
<feature type="transmembrane region" description="Helical" evidence="1">
    <location>
        <begin position="28"/>
        <end position="50"/>
    </location>
</feature>
<feature type="coiled-coil region" evidence="1">
    <location>
        <begin position="155"/>
        <end position="218"/>
    </location>
</feature>
<protein>
    <recommendedName>
        <fullName>Uncharacterized protein aq_1849</fullName>
    </recommendedName>
</protein>
<evidence type="ECO:0000255" key="1"/>
<evidence type="ECO:0000305" key="2"/>
<name>Y1849_AQUAE</name>
<proteinExistence type="predicted"/>
<accession>O67701</accession>